<name>PFKA_CROS8</name>
<gene>
    <name evidence="1" type="primary">pfkA</name>
    <name type="ordered locus">ESA_04127</name>
</gene>
<comment type="function">
    <text evidence="1">Catalyzes the phosphorylation of D-fructose 6-phosphate to fructose 1,6-bisphosphate by ATP, the first committing step of glycolysis.</text>
</comment>
<comment type="catalytic activity">
    <reaction evidence="1">
        <text>beta-D-fructose 6-phosphate + ATP = beta-D-fructose 1,6-bisphosphate + ADP + H(+)</text>
        <dbReference type="Rhea" id="RHEA:16109"/>
        <dbReference type="ChEBI" id="CHEBI:15378"/>
        <dbReference type="ChEBI" id="CHEBI:30616"/>
        <dbReference type="ChEBI" id="CHEBI:32966"/>
        <dbReference type="ChEBI" id="CHEBI:57634"/>
        <dbReference type="ChEBI" id="CHEBI:456216"/>
        <dbReference type="EC" id="2.7.1.11"/>
    </reaction>
</comment>
<comment type="cofactor">
    <cofactor evidence="1">
        <name>Mg(2+)</name>
        <dbReference type="ChEBI" id="CHEBI:18420"/>
    </cofactor>
</comment>
<comment type="activity regulation">
    <text evidence="1">Allosterically activated by ADP and other diphosphonucleosides, and allosterically inhibited by phosphoenolpyruvate.</text>
</comment>
<comment type="pathway">
    <text evidence="1">Carbohydrate degradation; glycolysis; D-glyceraldehyde 3-phosphate and glycerone phosphate from D-glucose: step 3/4.</text>
</comment>
<comment type="subunit">
    <text evidence="1">Homotetramer.</text>
</comment>
<comment type="subcellular location">
    <subcellularLocation>
        <location evidence="1">Cytoplasm</location>
    </subcellularLocation>
</comment>
<comment type="similarity">
    <text evidence="1">Belongs to the phosphofructokinase type A (PFKA) family. ATP-dependent PFK group I subfamily. Prokaryotic clade 'B1' sub-subfamily.</text>
</comment>
<reference key="1">
    <citation type="journal article" date="2010" name="PLoS ONE">
        <title>Genome sequence of Cronobacter sakazakii BAA-894 and comparative genomic hybridization analysis with other Cronobacter species.</title>
        <authorList>
            <person name="Kucerova E."/>
            <person name="Clifton S.W."/>
            <person name="Xia X.Q."/>
            <person name="Long F."/>
            <person name="Porwollik S."/>
            <person name="Fulton L."/>
            <person name="Fronick C."/>
            <person name="Minx P."/>
            <person name="Kyung K."/>
            <person name="Warren W."/>
            <person name="Fulton R."/>
            <person name="Feng D."/>
            <person name="Wollam A."/>
            <person name="Shah N."/>
            <person name="Bhonagiri V."/>
            <person name="Nash W.E."/>
            <person name="Hallsworth-Pepin K."/>
            <person name="Wilson R.K."/>
            <person name="McClelland M."/>
            <person name="Forsythe S.J."/>
        </authorList>
    </citation>
    <scope>NUCLEOTIDE SEQUENCE [LARGE SCALE GENOMIC DNA]</scope>
    <source>
        <strain>ATCC BAA-894</strain>
    </source>
</reference>
<sequence length="320" mass="35039">MIKKIGVLTSGGDAPGMNAAIRGVVRAALTEGLEVFGVYDGYLGLYEDRMIQLDRYSVSDMINRGGTFLGSARFPEFREEHIRAVAIENMKKRGIDALVVIGGDGSYMGAKRLTEMGFPCIGLPGTIDNDVAGTDYTIGYFTALHTVVEAIDRLRDTSSSHQRISIVEVMGRYCGDLTLAAAIAGGCEFIVLPEVEFNREDLVAEIKAGIAKGKKHAIVAITEHICDIDELAKYIETETKRETRATVLGHIQRGGSPVPYDRILASRMGAYAIELLLQGHGGRCVGIQNEKMVHHDIIDAIENMKRPFKGDWLECAKKLY</sequence>
<proteinExistence type="inferred from homology"/>
<organism>
    <name type="scientific">Cronobacter sakazakii (strain ATCC BAA-894)</name>
    <name type="common">Enterobacter sakazakii</name>
    <dbReference type="NCBI Taxonomy" id="290339"/>
    <lineage>
        <taxon>Bacteria</taxon>
        <taxon>Pseudomonadati</taxon>
        <taxon>Pseudomonadota</taxon>
        <taxon>Gammaproteobacteria</taxon>
        <taxon>Enterobacterales</taxon>
        <taxon>Enterobacteriaceae</taxon>
        <taxon>Cronobacter</taxon>
    </lineage>
</organism>
<feature type="chain" id="PRO_1000059762" description="ATP-dependent 6-phosphofructokinase">
    <location>
        <begin position="1"/>
        <end position="320"/>
    </location>
</feature>
<feature type="active site" description="Proton acceptor" evidence="1">
    <location>
        <position position="128"/>
    </location>
</feature>
<feature type="binding site" evidence="1">
    <location>
        <position position="12"/>
    </location>
    <ligand>
        <name>ATP</name>
        <dbReference type="ChEBI" id="CHEBI:30616"/>
    </ligand>
</feature>
<feature type="binding site" evidence="1">
    <location>
        <begin position="22"/>
        <end position="26"/>
    </location>
    <ligand>
        <name>ADP</name>
        <dbReference type="ChEBI" id="CHEBI:456216"/>
        <note>allosteric activator; ligand shared between dimeric partners</note>
    </ligand>
</feature>
<feature type="binding site" evidence="1">
    <location>
        <begin position="55"/>
        <end position="60"/>
    </location>
    <ligand>
        <name>ADP</name>
        <dbReference type="ChEBI" id="CHEBI:456216"/>
        <note>allosteric activator; ligand shared between dimeric partners</note>
    </ligand>
</feature>
<feature type="binding site" evidence="1">
    <location>
        <begin position="73"/>
        <end position="74"/>
    </location>
    <ligand>
        <name>ATP</name>
        <dbReference type="ChEBI" id="CHEBI:30616"/>
    </ligand>
</feature>
<feature type="binding site" evidence="1">
    <location>
        <begin position="103"/>
        <end position="106"/>
    </location>
    <ligand>
        <name>ATP</name>
        <dbReference type="ChEBI" id="CHEBI:30616"/>
    </ligand>
</feature>
<feature type="binding site" evidence="1">
    <location>
        <position position="104"/>
    </location>
    <ligand>
        <name>Mg(2+)</name>
        <dbReference type="ChEBI" id="CHEBI:18420"/>
        <note>catalytic</note>
    </ligand>
</feature>
<feature type="binding site" description="in other chain" evidence="1">
    <location>
        <begin position="126"/>
        <end position="128"/>
    </location>
    <ligand>
        <name>substrate</name>
        <note>ligand shared between dimeric partners</note>
    </ligand>
</feature>
<feature type="binding site" description="in other chain" evidence="1">
    <location>
        <position position="155"/>
    </location>
    <ligand>
        <name>ADP</name>
        <dbReference type="ChEBI" id="CHEBI:456216"/>
        <note>allosteric activator; ligand shared between dimeric partners</note>
    </ligand>
</feature>
<feature type="binding site" evidence="1">
    <location>
        <position position="163"/>
    </location>
    <ligand>
        <name>substrate</name>
        <note>ligand shared between dimeric partners</note>
    </ligand>
</feature>
<feature type="binding site" description="in other chain" evidence="1">
    <location>
        <begin position="170"/>
        <end position="172"/>
    </location>
    <ligand>
        <name>substrate</name>
        <note>ligand shared between dimeric partners</note>
    </ligand>
</feature>
<feature type="binding site" description="in other chain" evidence="1">
    <location>
        <begin position="186"/>
        <end position="188"/>
    </location>
    <ligand>
        <name>ADP</name>
        <dbReference type="ChEBI" id="CHEBI:456216"/>
        <note>allosteric activator; ligand shared between dimeric partners</note>
    </ligand>
</feature>
<feature type="binding site" description="in other chain" evidence="1">
    <location>
        <position position="212"/>
    </location>
    <ligand>
        <name>ADP</name>
        <dbReference type="ChEBI" id="CHEBI:456216"/>
        <note>allosteric activator; ligand shared between dimeric partners</note>
    </ligand>
</feature>
<feature type="binding site" description="in other chain" evidence="1">
    <location>
        <begin position="214"/>
        <end position="216"/>
    </location>
    <ligand>
        <name>ADP</name>
        <dbReference type="ChEBI" id="CHEBI:456216"/>
        <note>allosteric activator; ligand shared between dimeric partners</note>
    </ligand>
</feature>
<feature type="binding site" description="in other chain" evidence="1">
    <location>
        <position position="223"/>
    </location>
    <ligand>
        <name>substrate</name>
        <note>ligand shared between dimeric partners</note>
    </ligand>
</feature>
<feature type="binding site" evidence="1">
    <location>
        <position position="244"/>
    </location>
    <ligand>
        <name>substrate</name>
        <note>ligand shared between dimeric partners</note>
    </ligand>
</feature>
<feature type="binding site" description="in other chain" evidence="1">
    <location>
        <begin position="250"/>
        <end position="253"/>
    </location>
    <ligand>
        <name>substrate</name>
        <note>ligand shared between dimeric partners</note>
    </ligand>
</feature>
<protein>
    <recommendedName>
        <fullName evidence="1">ATP-dependent 6-phosphofructokinase</fullName>
        <shortName evidence="1">ATP-PFK</shortName>
        <shortName evidence="1">Phosphofructokinase</shortName>
        <ecNumber evidence="1">2.7.1.11</ecNumber>
    </recommendedName>
    <alternativeName>
        <fullName evidence="1">Phosphohexokinase</fullName>
    </alternativeName>
</protein>
<evidence type="ECO:0000255" key="1">
    <source>
        <dbReference type="HAMAP-Rule" id="MF_00339"/>
    </source>
</evidence>
<accession>A7MQ83</accession>
<dbReference type="EC" id="2.7.1.11" evidence="1"/>
<dbReference type="EMBL" id="CP000783">
    <property type="protein sequence ID" value="ABU79308.1"/>
    <property type="molecule type" value="Genomic_DNA"/>
</dbReference>
<dbReference type="RefSeq" id="WP_004388500.1">
    <property type="nucleotide sequence ID" value="NC_009778.1"/>
</dbReference>
<dbReference type="SMR" id="A7MQ83"/>
<dbReference type="GeneID" id="56732760"/>
<dbReference type="KEGG" id="esa:ESA_04127"/>
<dbReference type="HOGENOM" id="CLU_020655_0_1_6"/>
<dbReference type="UniPathway" id="UPA00109">
    <property type="reaction ID" value="UER00182"/>
</dbReference>
<dbReference type="Proteomes" id="UP000000260">
    <property type="component" value="Chromosome"/>
</dbReference>
<dbReference type="GO" id="GO:0005945">
    <property type="term" value="C:6-phosphofructokinase complex"/>
    <property type="evidence" value="ECO:0007669"/>
    <property type="project" value="TreeGrafter"/>
</dbReference>
<dbReference type="GO" id="GO:0003872">
    <property type="term" value="F:6-phosphofructokinase activity"/>
    <property type="evidence" value="ECO:0007669"/>
    <property type="project" value="UniProtKB-UniRule"/>
</dbReference>
<dbReference type="GO" id="GO:0016208">
    <property type="term" value="F:AMP binding"/>
    <property type="evidence" value="ECO:0007669"/>
    <property type="project" value="TreeGrafter"/>
</dbReference>
<dbReference type="GO" id="GO:0005524">
    <property type="term" value="F:ATP binding"/>
    <property type="evidence" value="ECO:0007669"/>
    <property type="project" value="UniProtKB-KW"/>
</dbReference>
<dbReference type="GO" id="GO:0070095">
    <property type="term" value="F:fructose-6-phosphate binding"/>
    <property type="evidence" value="ECO:0007669"/>
    <property type="project" value="TreeGrafter"/>
</dbReference>
<dbReference type="GO" id="GO:0042802">
    <property type="term" value="F:identical protein binding"/>
    <property type="evidence" value="ECO:0007669"/>
    <property type="project" value="TreeGrafter"/>
</dbReference>
<dbReference type="GO" id="GO:0046872">
    <property type="term" value="F:metal ion binding"/>
    <property type="evidence" value="ECO:0007669"/>
    <property type="project" value="UniProtKB-KW"/>
</dbReference>
<dbReference type="GO" id="GO:0048029">
    <property type="term" value="F:monosaccharide binding"/>
    <property type="evidence" value="ECO:0007669"/>
    <property type="project" value="TreeGrafter"/>
</dbReference>
<dbReference type="GO" id="GO:0061621">
    <property type="term" value="P:canonical glycolysis"/>
    <property type="evidence" value="ECO:0007669"/>
    <property type="project" value="TreeGrafter"/>
</dbReference>
<dbReference type="GO" id="GO:0030388">
    <property type="term" value="P:fructose 1,6-bisphosphate metabolic process"/>
    <property type="evidence" value="ECO:0007669"/>
    <property type="project" value="TreeGrafter"/>
</dbReference>
<dbReference type="GO" id="GO:0006002">
    <property type="term" value="P:fructose 6-phosphate metabolic process"/>
    <property type="evidence" value="ECO:0007669"/>
    <property type="project" value="InterPro"/>
</dbReference>
<dbReference type="CDD" id="cd00763">
    <property type="entry name" value="Bacterial_PFK"/>
    <property type="match status" value="1"/>
</dbReference>
<dbReference type="FunFam" id="3.40.50.450:FF:000001">
    <property type="entry name" value="ATP-dependent 6-phosphofructokinase"/>
    <property type="match status" value="1"/>
</dbReference>
<dbReference type="FunFam" id="3.40.50.460:FF:000002">
    <property type="entry name" value="ATP-dependent 6-phosphofructokinase"/>
    <property type="match status" value="1"/>
</dbReference>
<dbReference type="Gene3D" id="3.40.50.450">
    <property type="match status" value="1"/>
</dbReference>
<dbReference type="Gene3D" id="3.40.50.460">
    <property type="entry name" value="Phosphofructokinase domain"/>
    <property type="match status" value="1"/>
</dbReference>
<dbReference type="HAMAP" id="MF_00339">
    <property type="entry name" value="Phosphofructokinase_I_B1"/>
    <property type="match status" value="1"/>
</dbReference>
<dbReference type="InterPro" id="IPR022953">
    <property type="entry name" value="ATP_PFK"/>
</dbReference>
<dbReference type="InterPro" id="IPR012003">
    <property type="entry name" value="ATP_PFK_prok-type"/>
</dbReference>
<dbReference type="InterPro" id="IPR012828">
    <property type="entry name" value="PFKA_ATP_prok"/>
</dbReference>
<dbReference type="InterPro" id="IPR015912">
    <property type="entry name" value="Phosphofructokinase_CS"/>
</dbReference>
<dbReference type="InterPro" id="IPR000023">
    <property type="entry name" value="Phosphofructokinase_dom"/>
</dbReference>
<dbReference type="InterPro" id="IPR035966">
    <property type="entry name" value="PKF_sf"/>
</dbReference>
<dbReference type="NCBIfam" id="TIGR02482">
    <property type="entry name" value="PFKA_ATP"/>
    <property type="match status" value="1"/>
</dbReference>
<dbReference type="NCBIfam" id="NF002872">
    <property type="entry name" value="PRK03202.1"/>
    <property type="match status" value="1"/>
</dbReference>
<dbReference type="PANTHER" id="PTHR13697:SF4">
    <property type="entry name" value="ATP-DEPENDENT 6-PHOSPHOFRUCTOKINASE"/>
    <property type="match status" value="1"/>
</dbReference>
<dbReference type="PANTHER" id="PTHR13697">
    <property type="entry name" value="PHOSPHOFRUCTOKINASE"/>
    <property type="match status" value="1"/>
</dbReference>
<dbReference type="Pfam" id="PF00365">
    <property type="entry name" value="PFK"/>
    <property type="match status" value="1"/>
</dbReference>
<dbReference type="PIRSF" id="PIRSF000532">
    <property type="entry name" value="ATP_PFK_prok"/>
    <property type="match status" value="1"/>
</dbReference>
<dbReference type="PRINTS" id="PR00476">
    <property type="entry name" value="PHFRCTKINASE"/>
</dbReference>
<dbReference type="SUPFAM" id="SSF53784">
    <property type="entry name" value="Phosphofructokinase"/>
    <property type="match status" value="1"/>
</dbReference>
<dbReference type="PROSITE" id="PS00433">
    <property type="entry name" value="PHOSPHOFRUCTOKINASE"/>
    <property type="match status" value="1"/>
</dbReference>
<keyword id="KW-0021">Allosteric enzyme</keyword>
<keyword id="KW-0067">ATP-binding</keyword>
<keyword id="KW-0963">Cytoplasm</keyword>
<keyword id="KW-0324">Glycolysis</keyword>
<keyword id="KW-0418">Kinase</keyword>
<keyword id="KW-0460">Magnesium</keyword>
<keyword id="KW-0479">Metal-binding</keyword>
<keyword id="KW-0547">Nucleotide-binding</keyword>
<keyword id="KW-1185">Reference proteome</keyword>
<keyword id="KW-0808">Transferase</keyword>